<sequence length="181" mass="20903">MNGFSTEEDSRDGPPAQAAPFFGQTCCLIDGGERCPRPAGNASFSKRVQKSISQKKLKLDIDKNVRHLYICDFHKNYIQSVRNKRKRKTSDDGGDSPEHETDIPEVDLFQLQVNTLRRYKRYYKLQTRPGLNKAQLAETVSRHFRNIPVNEKETLAYFIYMVKSNRSRLDQKSESSKQLEA</sequence>
<dbReference type="EMBL" id="BC133761">
    <property type="protein sequence ID" value="AAI33762.1"/>
    <property type="molecule type" value="mRNA"/>
</dbReference>
<dbReference type="SMR" id="A4FVD8"/>
<dbReference type="AGR" id="Xenbase:XB-GENE-6253617"/>
<dbReference type="Xenbase" id="XB-GENE-6253617">
    <property type="gene designation" value="sap30l.S"/>
</dbReference>
<dbReference type="Proteomes" id="UP000186698">
    <property type="component" value="Unplaced"/>
</dbReference>
<dbReference type="GO" id="GO:0000118">
    <property type="term" value="C:histone deacetylase complex"/>
    <property type="evidence" value="ECO:0000250"/>
    <property type="project" value="UniProtKB"/>
</dbReference>
<dbReference type="GO" id="GO:0005730">
    <property type="term" value="C:nucleolus"/>
    <property type="evidence" value="ECO:0000250"/>
    <property type="project" value="UniProtKB"/>
</dbReference>
<dbReference type="GO" id="GO:0003677">
    <property type="term" value="F:DNA binding"/>
    <property type="evidence" value="ECO:0000250"/>
    <property type="project" value="UniProtKB"/>
</dbReference>
<dbReference type="GO" id="GO:0042393">
    <property type="term" value="F:histone binding"/>
    <property type="evidence" value="ECO:0000250"/>
    <property type="project" value="UniProtKB"/>
</dbReference>
<dbReference type="GO" id="GO:0044378">
    <property type="term" value="F:non-sequence-specific DNA binding, bending"/>
    <property type="evidence" value="ECO:0000250"/>
    <property type="project" value="UniProtKB"/>
</dbReference>
<dbReference type="GO" id="GO:0031491">
    <property type="term" value="F:nucleosome binding"/>
    <property type="evidence" value="ECO:0000250"/>
    <property type="project" value="UniProtKB"/>
</dbReference>
<dbReference type="GO" id="GO:0032266">
    <property type="term" value="F:phosphatidylinositol-3-phosphate binding"/>
    <property type="evidence" value="ECO:0000250"/>
    <property type="project" value="UniProtKB"/>
</dbReference>
<dbReference type="GO" id="GO:0070273">
    <property type="term" value="F:phosphatidylinositol-4-phosphate binding"/>
    <property type="evidence" value="ECO:0000250"/>
    <property type="project" value="UniProtKB"/>
</dbReference>
<dbReference type="GO" id="GO:0010314">
    <property type="term" value="F:phosphatidylinositol-5-phosphate binding"/>
    <property type="evidence" value="ECO:0000250"/>
    <property type="project" value="UniProtKB"/>
</dbReference>
<dbReference type="GO" id="GO:0003712">
    <property type="term" value="F:transcription coregulator activity"/>
    <property type="evidence" value="ECO:0000318"/>
    <property type="project" value="GO_Central"/>
</dbReference>
<dbReference type="GO" id="GO:0008270">
    <property type="term" value="F:zinc ion binding"/>
    <property type="evidence" value="ECO:0000250"/>
    <property type="project" value="UniProtKB"/>
</dbReference>
<dbReference type="GO" id="GO:0000122">
    <property type="term" value="P:negative regulation of transcription by RNA polymerase II"/>
    <property type="evidence" value="ECO:0000250"/>
    <property type="project" value="UniProtKB"/>
</dbReference>
<dbReference type="GO" id="GO:0006355">
    <property type="term" value="P:regulation of DNA-templated transcription"/>
    <property type="evidence" value="ECO:0000318"/>
    <property type="project" value="GO_Central"/>
</dbReference>
<dbReference type="FunFam" id="3.40.1800.30:FF:000001">
    <property type="entry name" value="Histone deacetylase complex subunit"/>
    <property type="match status" value="1"/>
</dbReference>
<dbReference type="Gene3D" id="3.40.1800.30">
    <property type="match status" value="1"/>
</dbReference>
<dbReference type="Gene3D" id="6.10.160.20">
    <property type="match status" value="1"/>
</dbReference>
<dbReference type="InterPro" id="IPR024145">
    <property type="entry name" value="His_deAcase_SAP30/SAP30L"/>
</dbReference>
<dbReference type="InterPro" id="IPR038291">
    <property type="entry name" value="SAP30_C_sf"/>
</dbReference>
<dbReference type="InterPro" id="IPR025718">
    <property type="entry name" value="SAP30_Sin3-bd"/>
</dbReference>
<dbReference type="InterPro" id="IPR025717">
    <property type="entry name" value="SAP30_zn-finger"/>
</dbReference>
<dbReference type="PANTHER" id="PTHR13286:SF5">
    <property type="entry name" value="HISTONE DEACETYLASE COMPLEX SUBUNIT SAP30L"/>
    <property type="match status" value="1"/>
</dbReference>
<dbReference type="PANTHER" id="PTHR13286">
    <property type="entry name" value="SAP30"/>
    <property type="match status" value="1"/>
</dbReference>
<dbReference type="Pfam" id="PF13867">
    <property type="entry name" value="SAP30_Sin3_bdg"/>
    <property type="match status" value="1"/>
</dbReference>
<dbReference type="Pfam" id="PF13866">
    <property type="entry name" value="zf-SAP30"/>
    <property type="match status" value="1"/>
</dbReference>
<comment type="function">
    <text evidence="1">Functions as a transcription repressor, probably via its interaction with histone deacetylase complexes. Involved in the functional recruitment of the class 1 Sin3-histone deacetylase complex (HDAC) to the nucleolus. Binds DNA, apparently without sequence-specificity, and bends bound double-stranded DNA. Binds phosphoinositol phosphates (phosphoinositol 3-phosphate, phosphoinositol 4-phosphate and phosphoinositol 5-phosphate) via the same basic sequence motif that mediates DNA binding and nuclear import.</text>
</comment>
<comment type="subunit">
    <text evidence="1">Interacts with components of the histone deacetylase complex sin3a, hdac1 and hdac2. Binds histones and nucleosomes.</text>
</comment>
<comment type="subcellular location">
    <subcellularLocation>
        <location evidence="1">Nucleus</location>
        <location evidence="1">Nucleolus</location>
    </subcellularLocation>
</comment>
<comment type="domain">
    <text evidence="1">The zinc-finger domain mediates direct interaction with DNA and phosphoinositol phosphates (phosphoinositol 3-phosphate, phosphoinositol 4-phosphate and phosphoinositol 5-phosphate). In vitro oxydation causes reversible disulfide bond formation between Cys residues in the zinc-finger domain and reversible loss of zinc ion binding.</text>
</comment>
<comment type="similarity">
    <text evidence="4">Belongs to the SAP30 family.</text>
</comment>
<evidence type="ECO:0000250" key="1">
    <source>
        <dbReference type="UniProtKB" id="Q9HAJ7"/>
    </source>
</evidence>
<evidence type="ECO:0000255" key="2">
    <source>
        <dbReference type="PROSITE-ProRule" id="PRU00114"/>
    </source>
</evidence>
<evidence type="ECO:0000256" key="3">
    <source>
        <dbReference type="SAM" id="MobiDB-lite"/>
    </source>
</evidence>
<evidence type="ECO:0000305" key="4"/>
<keyword id="KW-1015">Disulfide bond</keyword>
<keyword id="KW-0238">DNA-binding</keyword>
<keyword id="KW-0446">Lipid-binding</keyword>
<keyword id="KW-0479">Metal-binding</keyword>
<keyword id="KW-0539">Nucleus</keyword>
<keyword id="KW-1185">Reference proteome</keyword>
<keyword id="KW-0678">Repressor</keyword>
<keyword id="KW-0804">Transcription</keyword>
<keyword id="KW-0805">Transcription regulation</keyword>
<keyword id="KW-0862">Zinc</keyword>
<keyword id="KW-0863">Zinc-finger</keyword>
<proteinExistence type="evidence at transcript level"/>
<feature type="chain" id="PRO_0000309503" description="Histone deacetylase complex subunit SAP30L-A">
    <location>
        <begin position="1"/>
        <end position="181"/>
    </location>
</feature>
<feature type="zinc finger region" description="Atypical">
    <location>
        <begin position="26"/>
        <end position="74"/>
    </location>
</feature>
<feature type="region of interest" description="Disordered" evidence="3">
    <location>
        <begin position="82"/>
        <end position="103"/>
    </location>
</feature>
<feature type="region of interest" description="Important for DNA and phosphoinositide binding" evidence="1">
    <location>
        <begin position="85"/>
        <end position="87"/>
    </location>
</feature>
<feature type="short sequence motif" description="Nuclear localization signal (NLS)" evidence="1">
    <location>
        <begin position="83"/>
        <end position="88"/>
    </location>
</feature>
<feature type="disulfide bond" description="Redox-active" evidence="2">
    <location>
        <begin position="26"/>
        <end position="27"/>
    </location>
</feature>
<feature type="disulfide bond" description="Redox-active" evidence="2">
    <location>
        <begin position="35"/>
        <end position="71"/>
    </location>
</feature>
<name>S30LA_XENLA</name>
<protein>
    <recommendedName>
        <fullName>Histone deacetylase complex subunit SAP30L-A</fullName>
    </recommendedName>
    <alternativeName>
        <fullName>Sin3 corepressor complex subunit SAP30L-A</fullName>
    </alternativeName>
    <alternativeName>
        <fullName>Sin3-associated protein p30-like A</fullName>
    </alternativeName>
</protein>
<organism>
    <name type="scientific">Xenopus laevis</name>
    <name type="common">African clawed frog</name>
    <dbReference type="NCBI Taxonomy" id="8355"/>
    <lineage>
        <taxon>Eukaryota</taxon>
        <taxon>Metazoa</taxon>
        <taxon>Chordata</taxon>
        <taxon>Craniata</taxon>
        <taxon>Vertebrata</taxon>
        <taxon>Euteleostomi</taxon>
        <taxon>Amphibia</taxon>
        <taxon>Batrachia</taxon>
        <taxon>Anura</taxon>
        <taxon>Pipoidea</taxon>
        <taxon>Pipidae</taxon>
        <taxon>Xenopodinae</taxon>
        <taxon>Xenopus</taxon>
        <taxon>Xenopus</taxon>
    </lineage>
</organism>
<accession>A4FVD8</accession>
<reference key="1">
    <citation type="submission" date="2007-03" db="EMBL/GenBank/DDBJ databases">
        <authorList>
            <consortium name="NIH - Xenopus Gene Collection (XGC) project"/>
        </authorList>
    </citation>
    <scope>NUCLEOTIDE SEQUENCE [LARGE SCALE MRNA]</scope>
    <source>
        <tissue>Egg</tissue>
    </source>
</reference>
<gene>
    <name type="primary">sap30l-a</name>
</gene>